<sequence>MPSWREKHEKIVQSKILVIGAGGIGCELLKNLAVTGFRKVHVIDLDTIDISNLNRQFLFRKEHVSSSKAATATQVVKQFCPQIELTFDHDSIFEKKYNMEFFQAYDIVLNALDNRAARNYVNRMCHAANRPLIDSGSGGYFGQVSVIMRGKTECYECVDKPVQQTTYPGCTIRNTPSEHIHCTVWAKHVFNQLFGEVDIDDDVSPDMDAVDPDNTEAVTTEKEKEAMKEEPAPVGTRQWAESVDYDAAKVFDKLFLHDIEYLCKMEHLWKQRKRPSPLEFHTASSTGGEPQSLCDAQRDDTSIWTLSTCAKVFSTCIQELLEQIRAEPDVKLAFDKDHAIIMSFVAACANIRAKIFGIPMKSQFDIKAMAGNIIPAIASTNAIVAGIIVTEAVRVIEGSTVICNSSIATTQSNPRGRIFGGDATNPPNPRCFVCSEKREVFIYVNPDTMTVGGLCEKVLKQKLNMLAPDVMDSATSRIIVSSDGDTDDLLPKKLAEVSIEDGAILSCDDFQQEMEIKLFIKKGDRLAGDDFEVARSEKEPEPDDRKRKADGSEEPEAKRQKVEEKDDKNGNEAVAEITETMA</sequence>
<evidence type="ECO:0000250" key="1"/>
<evidence type="ECO:0000255" key="2">
    <source>
        <dbReference type="PROSITE-ProRule" id="PRU10132"/>
    </source>
</evidence>
<evidence type="ECO:0000256" key="3">
    <source>
        <dbReference type="SAM" id="MobiDB-lite"/>
    </source>
</evidence>
<evidence type="ECO:0000305" key="4"/>
<evidence type="ECO:0000305" key="5">
    <source>
    </source>
</evidence>
<evidence type="ECO:0000305" key="6">
    <source>
    </source>
</evidence>
<evidence type="ECO:0000305" key="7">
    <source>
    </source>
</evidence>
<protein>
    <recommendedName>
        <fullName>SUMO-activating enzyme subunit uba-2</fullName>
        <ecNumber>2.3.2.-</ecNumber>
    </recommendedName>
</protein>
<gene>
    <name type="primary">uba-2</name>
    <name type="ORF">W02A11.4</name>
</gene>
<proteinExistence type="inferred from homology"/>
<dbReference type="EC" id="2.3.2.-"/>
<dbReference type="EMBL" id="Z82062">
    <property type="protein sequence ID" value="CAB54319.4"/>
    <property type="molecule type" value="Genomic_DNA"/>
</dbReference>
<dbReference type="PIR" id="T26072">
    <property type="entry name" value="T26072"/>
</dbReference>
<dbReference type="RefSeq" id="NP_001293154.1">
    <property type="nucleotide sequence ID" value="NM_001306225.4"/>
</dbReference>
<dbReference type="SMR" id="Q9NAN1"/>
<dbReference type="FunCoup" id="Q9NAN1">
    <property type="interactions" value="3692"/>
</dbReference>
<dbReference type="STRING" id="6239.W02A11.4.1"/>
<dbReference type="iPTMnet" id="Q9NAN1"/>
<dbReference type="PaxDb" id="6239-W02A11.4"/>
<dbReference type="PeptideAtlas" id="Q9NAN1"/>
<dbReference type="EnsemblMetazoa" id="W02A11.4.1">
    <property type="protein sequence ID" value="W02A11.4.1"/>
    <property type="gene ID" value="WBGene00006700"/>
</dbReference>
<dbReference type="GeneID" id="24104970"/>
<dbReference type="KEGG" id="cel:CELE_W02A11.4"/>
<dbReference type="UCSC" id="W02A11.4">
    <property type="organism name" value="c. elegans"/>
</dbReference>
<dbReference type="AGR" id="WB:WBGene00006700"/>
<dbReference type="CTD" id="24104970"/>
<dbReference type="WormBase" id="W02A11.4">
    <property type="protein sequence ID" value="CE40719"/>
    <property type="gene ID" value="WBGene00006700"/>
    <property type="gene designation" value="uba-2"/>
</dbReference>
<dbReference type="eggNOG" id="KOG2013">
    <property type="taxonomic scope" value="Eukaryota"/>
</dbReference>
<dbReference type="GeneTree" id="ENSGT00550000074924"/>
<dbReference type="HOGENOM" id="CLU_013325_7_4_1"/>
<dbReference type="InParanoid" id="Q9NAN1"/>
<dbReference type="OMA" id="TPSEHIH"/>
<dbReference type="OrthoDB" id="10255449at2759"/>
<dbReference type="PhylomeDB" id="Q9NAN1"/>
<dbReference type="Reactome" id="R-CEL-3065676">
    <property type="pathway name" value="SUMO is conjugated to E1 (UBA2:SAE1)"/>
</dbReference>
<dbReference type="Reactome" id="R-CEL-3065678">
    <property type="pathway name" value="SUMO is transferred from E1 to E2 (UBE2I, UBC9)"/>
</dbReference>
<dbReference type="UniPathway" id="UPA00886"/>
<dbReference type="PRO" id="PR:Q9NAN1"/>
<dbReference type="Proteomes" id="UP000001940">
    <property type="component" value="Chromosome I"/>
</dbReference>
<dbReference type="Bgee" id="WBGene00006700">
    <property type="expression patterns" value="Expressed in adult organism and 3 other cell types or tissues"/>
</dbReference>
<dbReference type="GO" id="GO:0005737">
    <property type="term" value="C:cytoplasm"/>
    <property type="evidence" value="ECO:0000318"/>
    <property type="project" value="GO_Central"/>
</dbReference>
<dbReference type="GO" id="GO:0031510">
    <property type="term" value="C:SUMO activating enzyme complex"/>
    <property type="evidence" value="ECO:0000250"/>
    <property type="project" value="WormBase"/>
</dbReference>
<dbReference type="GO" id="GO:0005524">
    <property type="term" value="F:ATP binding"/>
    <property type="evidence" value="ECO:0007669"/>
    <property type="project" value="UniProtKB-KW"/>
</dbReference>
<dbReference type="GO" id="GO:0046872">
    <property type="term" value="F:metal ion binding"/>
    <property type="evidence" value="ECO:0007669"/>
    <property type="project" value="UniProtKB-KW"/>
</dbReference>
<dbReference type="GO" id="GO:0019948">
    <property type="term" value="F:SUMO activating enzyme activity"/>
    <property type="evidence" value="ECO:0000314"/>
    <property type="project" value="WormBase"/>
</dbReference>
<dbReference type="GO" id="GO:0016740">
    <property type="term" value="F:transferase activity"/>
    <property type="evidence" value="ECO:0007669"/>
    <property type="project" value="UniProtKB-KW"/>
</dbReference>
<dbReference type="GO" id="GO:0009952">
    <property type="term" value="P:anterior/posterior pattern specification"/>
    <property type="evidence" value="ECO:0000316"/>
    <property type="project" value="WormBase"/>
</dbReference>
<dbReference type="GO" id="GO:0009792">
    <property type="term" value="P:embryo development ending in birth or egg hatching"/>
    <property type="evidence" value="ECO:0000316"/>
    <property type="project" value="WormBase"/>
</dbReference>
<dbReference type="GO" id="GO:0002119">
    <property type="term" value="P:nematode larval development"/>
    <property type="evidence" value="ECO:0000316"/>
    <property type="project" value="WormBase"/>
</dbReference>
<dbReference type="GO" id="GO:0016925">
    <property type="term" value="P:protein sumoylation"/>
    <property type="evidence" value="ECO:0000314"/>
    <property type="project" value="WormBase"/>
</dbReference>
<dbReference type="FunFam" id="3.50.50.80:FF:000004">
    <property type="entry name" value="Ubiquitin-activating enzyme E1-like"/>
    <property type="match status" value="1"/>
</dbReference>
<dbReference type="Gene3D" id="1.10.10.520">
    <property type="entry name" value="Ubiquitin activating enzymes (Uba3). Chain: B, domain 2"/>
    <property type="match status" value="1"/>
</dbReference>
<dbReference type="Gene3D" id="3.50.50.80">
    <property type="entry name" value="Ubiquitin-activating enzyme E1, inactive adenylation domain, subdomain 1"/>
    <property type="match status" value="1"/>
</dbReference>
<dbReference type="Gene3D" id="3.10.290.20">
    <property type="entry name" value="Ubiquitin-like 2 activating enzyme e1b. Chain: B, domain 3"/>
    <property type="match status" value="1"/>
</dbReference>
<dbReference type="InterPro" id="IPR045886">
    <property type="entry name" value="ThiF/MoeB/HesA"/>
</dbReference>
<dbReference type="InterPro" id="IPR000594">
    <property type="entry name" value="ThiF_NAD_FAD-bd"/>
</dbReference>
<dbReference type="InterPro" id="IPR028077">
    <property type="entry name" value="UAE_UbL_dom"/>
</dbReference>
<dbReference type="InterPro" id="IPR042449">
    <property type="entry name" value="Ub-E1_IAD_1"/>
</dbReference>
<dbReference type="InterPro" id="IPR023318">
    <property type="entry name" value="Ub_act_enz_dom_a_sf"/>
</dbReference>
<dbReference type="InterPro" id="IPR030661">
    <property type="entry name" value="Uba2"/>
</dbReference>
<dbReference type="InterPro" id="IPR035985">
    <property type="entry name" value="Ubiquitin-activating_enz"/>
</dbReference>
<dbReference type="InterPro" id="IPR033127">
    <property type="entry name" value="UBQ-activ_enz_E1_Cys_AS"/>
</dbReference>
<dbReference type="PANTHER" id="PTHR10953:SF5">
    <property type="entry name" value="SUMO-ACTIVATING ENZYME SUBUNIT 2"/>
    <property type="match status" value="1"/>
</dbReference>
<dbReference type="PANTHER" id="PTHR10953">
    <property type="entry name" value="UBIQUITIN-ACTIVATING ENZYME E1"/>
    <property type="match status" value="1"/>
</dbReference>
<dbReference type="Pfam" id="PF00899">
    <property type="entry name" value="ThiF"/>
    <property type="match status" value="1"/>
</dbReference>
<dbReference type="Pfam" id="PF14732">
    <property type="entry name" value="UAE_UbL"/>
    <property type="match status" value="1"/>
</dbReference>
<dbReference type="PIRSF" id="PIRSF039133">
    <property type="entry name" value="SUMO_E1B"/>
    <property type="match status" value="1"/>
</dbReference>
<dbReference type="SUPFAM" id="SSF69572">
    <property type="entry name" value="Activating enzymes of the ubiquitin-like proteins"/>
    <property type="match status" value="1"/>
</dbReference>
<dbReference type="PROSITE" id="PS00865">
    <property type="entry name" value="UBIQUITIN_ACTIVAT_2"/>
    <property type="match status" value="1"/>
</dbReference>
<comment type="function">
    <text evidence="5 6 7">The dimeric enzyme acts as an E1 ligase for smo-1. It mediates ATP-dependent activation of smo-1 and formation of a thioester with a conserved cysteine residue on uba-2 (Probable).</text>
</comment>
<comment type="pathway">
    <text>Protein modification; protein sumoylation.</text>
</comment>
<comment type="subunit">
    <text>Heterodimer with aos-1.</text>
</comment>
<comment type="similarity">
    <text evidence="4">Belongs to the ubiquitin-activating E1 family.</text>
</comment>
<reference key="1">
    <citation type="journal article" date="1998" name="Science">
        <title>Genome sequence of the nematode C. elegans: a platform for investigating biology.</title>
        <authorList>
            <consortium name="The C. elegans sequencing consortium"/>
        </authorList>
    </citation>
    <scope>NUCLEOTIDE SEQUENCE [LARGE SCALE GENOMIC DNA]</scope>
    <source>
        <strain>Bristol N2</strain>
    </source>
</reference>
<reference key="2">
    <citation type="journal article" date="2002" name="Genome Biol.">
        <title>Functional and phylogenetic analysis of the ubiquitylation system in Caenorhabditis elegans: ubiquitin-conjugating enzymes, ubiquitin-activating enzymes, and ubiquitin-like proteins.</title>
        <authorList>
            <person name="Jones D."/>
            <person name="Crowe E."/>
            <person name="Stevens T.A."/>
            <person name="Candido E.P.M."/>
        </authorList>
    </citation>
    <scope>FUNCTION</scope>
</reference>
<reference key="3">
    <citation type="journal article" date="2004" name="Nat. Genet.">
        <title>SUMO modification is required for in vivo Hox gene regulation by the Caenorhabditis elegans Polycomb group protein SOP-2.</title>
        <authorList>
            <person name="Zhang H."/>
            <person name="Smolen G.A."/>
            <person name="Palmer R."/>
            <person name="Christoforou A."/>
            <person name="van den Heuvel S."/>
            <person name="Haber D.A."/>
        </authorList>
    </citation>
    <scope>FUNCTION</scope>
</reference>
<reference key="4">
    <citation type="journal article" date="2005" name="EMBO J.">
        <title>Chromatin regulation and sumoylation in the inhibition of Ras-induced vulval development in Caenorhabditis elegans.</title>
        <authorList>
            <person name="Poulin G."/>
            <person name="Dong Y."/>
            <person name="Fraser A.G."/>
            <person name="Hopper N.A."/>
            <person name="Ahringer J."/>
        </authorList>
    </citation>
    <scope>FUNCTION</scope>
</reference>
<keyword id="KW-0067">ATP-binding</keyword>
<keyword id="KW-0479">Metal-binding</keyword>
<keyword id="KW-0547">Nucleotide-binding</keyword>
<keyword id="KW-1185">Reference proteome</keyword>
<keyword id="KW-0808">Transferase</keyword>
<keyword id="KW-0833">Ubl conjugation pathway</keyword>
<keyword id="KW-0862">Zinc</keyword>
<name>SAE2_CAEEL</name>
<accession>Q9NAN1</accession>
<organism>
    <name type="scientific">Caenorhabditis elegans</name>
    <dbReference type="NCBI Taxonomy" id="6239"/>
    <lineage>
        <taxon>Eukaryota</taxon>
        <taxon>Metazoa</taxon>
        <taxon>Ecdysozoa</taxon>
        <taxon>Nematoda</taxon>
        <taxon>Chromadorea</taxon>
        <taxon>Rhabditida</taxon>
        <taxon>Rhabditina</taxon>
        <taxon>Rhabditomorpha</taxon>
        <taxon>Rhabditoidea</taxon>
        <taxon>Rhabditidae</taxon>
        <taxon>Peloderinae</taxon>
        <taxon>Caenorhabditis</taxon>
    </lineage>
</organism>
<feature type="chain" id="PRO_0000270190" description="SUMO-activating enzyme subunit uba-2">
    <location>
        <begin position="1"/>
        <end position="582"/>
    </location>
</feature>
<feature type="region of interest" description="Disordered" evidence="3">
    <location>
        <begin position="204"/>
        <end position="235"/>
    </location>
</feature>
<feature type="region of interest" description="Disordered" evidence="3">
    <location>
        <begin position="531"/>
        <end position="582"/>
    </location>
</feature>
<feature type="compositionally biased region" description="Acidic residues" evidence="3">
    <location>
        <begin position="204"/>
        <end position="214"/>
    </location>
</feature>
<feature type="compositionally biased region" description="Basic and acidic residues" evidence="3">
    <location>
        <begin position="219"/>
        <end position="231"/>
    </location>
</feature>
<feature type="compositionally biased region" description="Basic and acidic residues" evidence="3">
    <location>
        <begin position="531"/>
        <end position="570"/>
    </location>
</feature>
<feature type="active site" description="Glycyl thioester intermediate" evidence="2">
    <location>
        <position position="170"/>
    </location>
</feature>
<feature type="binding site" evidence="1">
    <location>
        <begin position="20"/>
        <end position="25"/>
    </location>
    <ligand>
        <name>ATP</name>
        <dbReference type="ChEBI" id="CHEBI:30616"/>
    </ligand>
</feature>
<feature type="binding site" evidence="1">
    <location>
        <position position="44"/>
    </location>
    <ligand>
        <name>ATP</name>
        <dbReference type="ChEBI" id="CHEBI:30616"/>
    </ligand>
</feature>
<feature type="binding site" evidence="1">
    <location>
        <begin position="52"/>
        <end position="55"/>
    </location>
    <ligand>
        <name>ATP</name>
        <dbReference type="ChEBI" id="CHEBI:30616"/>
    </ligand>
</feature>
<feature type="binding site" evidence="1">
    <location>
        <position position="68"/>
    </location>
    <ligand>
        <name>ATP</name>
        <dbReference type="ChEBI" id="CHEBI:30616"/>
    </ligand>
</feature>
<feature type="binding site" evidence="1">
    <location>
        <begin position="91"/>
        <end position="92"/>
    </location>
    <ligand>
        <name>ATP</name>
        <dbReference type="ChEBI" id="CHEBI:30616"/>
    </ligand>
</feature>
<feature type="binding site" evidence="1">
    <location>
        <begin position="113"/>
        <end position="118"/>
    </location>
    <ligand>
        <name>ATP</name>
        <dbReference type="ChEBI" id="CHEBI:30616"/>
    </ligand>
</feature>
<feature type="binding site" evidence="1">
    <location>
        <position position="154"/>
    </location>
    <ligand>
        <name>Zn(2+)</name>
        <dbReference type="ChEBI" id="CHEBI:29105"/>
    </ligand>
</feature>
<feature type="binding site" evidence="1">
    <location>
        <position position="157"/>
    </location>
    <ligand>
        <name>Zn(2+)</name>
        <dbReference type="ChEBI" id="CHEBI:29105"/>
    </ligand>
</feature>
<feature type="binding site" evidence="1">
    <location>
        <position position="431"/>
    </location>
    <ligand>
        <name>Zn(2+)</name>
        <dbReference type="ChEBI" id="CHEBI:29105"/>
    </ligand>
</feature>
<feature type="binding site" evidence="1">
    <location>
        <position position="434"/>
    </location>
    <ligand>
        <name>Zn(2+)</name>
        <dbReference type="ChEBI" id="CHEBI:29105"/>
    </ligand>
</feature>